<accession>B1XGY9</accession>
<dbReference type="EC" id="2.1.1.166" evidence="1"/>
<dbReference type="EMBL" id="CP000948">
    <property type="protein sequence ID" value="ACB04256.1"/>
    <property type="molecule type" value="Genomic_DNA"/>
</dbReference>
<dbReference type="RefSeq" id="WP_000145975.1">
    <property type="nucleotide sequence ID" value="NC_010473.1"/>
</dbReference>
<dbReference type="SMR" id="B1XGY9"/>
<dbReference type="GeneID" id="93778802"/>
<dbReference type="KEGG" id="ecd:ECDH10B_3353"/>
<dbReference type="HOGENOM" id="CLU_009422_4_0_6"/>
<dbReference type="GO" id="GO:0005737">
    <property type="term" value="C:cytoplasm"/>
    <property type="evidence" value="ECO:0007669"/>
    <property type="project" value="UniProtKB-SubCell"/>
</dbReference>
<dbReference type="GO" id="GO:0008650">
    <property type="term" value="F:rRNA (uridine-2'-O-)-methyltransferase activity"/>
    <property type="evidence" value="ECO:0007669"/>
    <property type="project" value="UniProtKB-UniRule"/>
</dbReference>
<dbReference type="CDD" id="cd02440">
    <property type="entry name" value="AdoMet_MTases"/>
    <property type="match status" value="1"/>
</dbReference>
<dbReference type="FunFam" id="3.40.50.150:FF:000005">
    <property type="entry name" value="Ribosomal RNA large subunit methyltransferase E"/>
    <property type="match status" value="1"/>
</dbReference>
<dbReference type="Gene3D" id="3.40.50.150">
    <property type="entry name" value="Vaccinia Virus protein VP39"/>
    <property type="match status" value="1"/>
</dbReference>
<dbReference type="HAMAP" id="MF_01547">
    <property type="entry name" value="RNA_methyltr_E"/>
    <property type="match status" value="1"/>
</dbReference>
<dbReference type="InterPro" id="IPR050082">
    <property type="entry name" value="RNA_methyltr_RlmE"/>
</dbReference>
<dbReference type="InterPro" id="IPR002877">
    <property type="entry name" value="RNA_MeTrfase_FtsJ_dom"/>
</dbReference>
<dbReference type="InterPro" id="IPR015507">
    <property type="entry name" value="rRNA-MeTfrase_E"/>
</dbReference>
<dbReference type="InterPro" id="IPR004512">
    <property type="entry name" value="rRNA_MeTrfase_gammaproteobac"/>
</dbReference>
<dbReference type="InterPro" id="IPR029063">
    <property type="entry name" value="SAM-dependent_MTases_sf"/>
</dbReference>
<dbReference type="NCBIfam" id="NF008390">
    <property type="entry name" value="PRK11188.1"/>
    <property type="match status" value="1"/>
</dbReference>
<dbReference type="NCBIfam" id="TIGR00438">
    <property type="entry name" value="rrmJ"/>
    <property type="match status" value="1"/>
</dbReference>
<dbReference type="PANTHER" id="PTHR10920">
    <property type="entry name" value="RIBOSOMAL RNA METHYLTRANSFERASE"/>
    <property type="match status" value="1"/>
</dbReference>
<dbReference type="PANTHER" id="PTHR10920:SF18">
    <property type="entry name" value="RRNA METHYLTRANSFERASE 2, MITOCHONDRIAL"/>
    <property type="match status" value="1"/>
</dbReference>
<dbReference type="Pfam" id="PF01728">
    <property type="entry name" value="FtsJ"/>
    <property type="match status" value="1"/>
</dbReference>
<dbReference type="PIRSF" id="PIRSF005461">
    <property type="entry name" value="23S_rRNA_mtase"/>
    <property type="match status" value="1"/>
</dbReference>
<dbReference type="SUPFAM" id="SSF53335">
    <property type="entry name" value="S-adenosyl-L-methionine-dependent methyltransferases"/>
    <property type="match status" value="1"/>
</dbReference>
<name>RLME_ECODH</name>
<keyword id="KW-0963">Cytoplasm</keyword>
<keyword id="KW-0489">Methyltransferase</keyword>
<keyword id="KW-0698">rRNA processing</keyword>
<keyword id="KW-0949">S-adenosyl-L-methionine</keyword>
<keyword id="KW-0808">Transferase</keyword>
<feature type="chain" id="PRO_1000194991" description="Ribosomal RNA large subunit methyltransferase E">
    <location>
        <begin position="1"/>
        <end position="209"/>
    </location>
</feature>
<feature type="active site" description="Proton acceptor" evidence="1">
    <location>
        <position position="164"/>
    </location>
</feature>
<feature type="binding site" evidence="1">
    <location>
        <position position="63"/>
    </location>
    <ligand>
        <name>S-adenosyl-L-methionine</name>
        <dbReference type="ChEBI" id="CHEBI:59789"/>
    </ligand>
</feature>
<feature type="binding site" evidence="1">
    <location>
        <position position="65"/>
    </location>
    <ligand>
        <name>S-adenosyl-L-methionine</name>
        <dbReference type="ChEBI" id="CHEBI:59789"/>
    </ligand>
</feature>
<feature type="binding site" evidence="1">
    <location>
        <position position="83"/>
    </location>
    <ligand>
        <name>S-adenosyl-L-methionine</name>
        <dbReference type="ChEBI" id="CHEBI:59789"/>
    </ligand>
</feature>
<feature type="binding site" evidence="1">
    <location>
        <position position="99"/>
    </location>
    <ligand>
        <name>S-adenosyl-L-methionine</name>
        <dbReference type="ChEBI" id="CHEBI:59789"/>
    </ligand>
</feature>
<feature type="binding site" evidence="1">
    <location>
        <position position="124"/>
    </location>
    <ligand>
        <name>S-adenosyl-L-methionine</name>
        <dbReference type="ChEBI" id="CHEBI:59789"/>
    </ligand>
</feature>
<organism>
    <name type="scientific">Escherichia coli (strain K12 / DH10B)</name>
    <dbReference type="NCBI Taxonomy" id="316385"/>
    <lineage>
        <taxon>Bacteria</taxon>
        <taxon>Pseudomonadati</taxon>
        <taxon>Pseudomonadota</taxon>
        <taxon>Gammaproteobacteria</taxon>
        <taxon>Enterobacterales</taxon>
        <taxon>Enterobacteriaceae</taxon>
        <taxon>Escherichia</taxon>
    </lineage>
</organism>
<reference key="1">
    <citation type="journal article" date="2008" name="J. Bacteriol.">
        <title>The complete genome sequence of Escherichia coli DH10B: insights into the biology of a laboratory workhorse.</title>
        <authorList>
            <person name="Durfee T."/>
            <person name="Nelson R."/>
            <person name="Baldwin S."/>
            <person name="Plunkett G. III"/>
            <person name="Burland V."/>
            <person name="Mau B."/>
            <person name="Petrosino J.F."/>
            <person name="Qin X."/>
            <person name="Muzny D.M."/>
            <person name="Ayele M."/>
            <person name="Gibbs R.A."/>
            <person name="Csorgo B."/>
            <person name="Posfai G."/>
            <person name="Weinstock G.M."/>
            <person name="Blattner F.R."/>
        </authorList>
    </citation>
    <scope>NUCLEOTIDE SEQUENCE [LARGE SCALE GENOMIC DNA]</scope>
    <source>
        <strain>K12 / DH10B</strain>
    </source>
</reference>
<evidence type="ECO:0000255" key="1">
    <source>
        <dbReference type="HAMAP-Rule" id="MF_01547"/>
    </source>
</evidence>
<gene>
    <name evidence="1" type="primary">rlmE</name>
    <name evidence="1" type="synonym">ftsJ</name>
    <name evidence="1" type="synonym">rrmJ</name>
    <name type="ordered locus">ECDH10B_3353</name>
</gene>
<sequence length="209" mass="23335">MTGKKRSASSSRWLQEHFSDKYVQQAQKKGLRSRAWFKLDEIQQSDKLFKPGMTVVDLGAAPGGWSQYVVTQIGGKGRIIACDLLPMDPIVGVDFLQGDFRDELVMKALLERVGDSKVQVVMSDMAPNMSGTPAVDIPRAMYLVELALEMCRDVLAPGGSFVVKVFQGEGFDEYLREIRSLFTKVKVRKPDSSRARSREVYIVATGRKP</sequence>
<proteinExistence type="inferred from homology"/>
<comment type="function">
    <text evidence="1">Specifically methylates the uridine in position 2552 of 23S rRNA at the 2'-O position of the ribose in the fully assembled 50S ribosomal subunit.</text>
</comment>
<comment type="catalytic activity">
    <reaction evidence="1">
        <text>uridine(2552) in 23S rRNA + S-adenosyl-L-methionine = 2'-O-methyluridine(2552) in 23S rRNA + S-adenosyl-L-homocysteine + H(+)</text>
        <dbReference type="Rhea" id="RHEA:42720"/>
        <dbReference type="Rhea" id="RHEA-COMP:10202"/>
        <dbReference type="Rhea" id="RHEA-COMP:10203"/>
        <dbReference type="ChEBI" id="CHEBI:15378"/>
        <dbReference type="ChEBI" id="CHEBI:57856"/>
        <dbReference type="ChEBI" id="CHEBI:59789"/>
        <dbReference type="ChEBI" id="CHEBI:65315"/>
        <dbReference type="ChEBI" id="CHEBI:74478"/>
        <dbReference type="EC" id="2.1.1.166"/>
    </reaction>
</comment>
<comment type="subcellular location">
    <subcellularLocation>
        <location evidence="1">Cytoplasm</location>
    </subcellularLocation>
</comment>
<comment type="similarity">
    <text evidence="1">Belongs to the class I-like SAM-binding methyltransferase superfamily. RNA methyltransferase RlmE family.</text>
</comment>
<protein>
    <recommendedName>
        <fullName evidence="1">Ribosomal RNA large subunit methyltransferase E</fullName>
        <ecNumber evidence="1">2.1.1.166</ecNumber>
    </recommendedName>
    <alternativeName>
        <fullName evidence="1">23S rRNA Um2552 methyltransferase</fullName>
    </alternativeName>
    <alternativeName>
        <fullName evidence="1">rRNA (uridine-2'-O-)-methyltransferase</fullName>
    </alternativeName>
</protein>